<evidence type="ECO:0000255" key="1">
    <source>
        <dbReference type="HAMAP-Rule" id="MF_00394"/>
    </source>
</evidence>
<feature type="chain" id="PRO_0000138032" description="Glycerol-3-phosphate dehydrogenase [NAD(P)+]">
    <location>
        <begin position="1"/>
        <end position="332"/>
    </location>
</feature>
<feature type="active site" description="Proton acceptor" evidence="1">
    <location>
        <position position="192"/>
    </location>
</feature>
<feature type="binding site" evidence="1">
    <location>
        <position position="11"/>
    </location>
    <ligand>
        <name>NADPH</name>
        <dbReference type="ChEBI" id="CHEBI:57783"/>
    </ligand>
</feature>
<feature type="binding site" evidence="1">
    <location>
        <position position="12"/>
    </location>
    <ligand>
        <name>NADPH</name>
        <dbReference type="ChEBI" id="CHEBI:57783"/>
    </ligand>
</feature>
<feature type="binding site" evidence="1">
    <location>
        <position position="32"/>
    </location>
    <ligand>
        <name>NADPH</name>
        <dbReference type="ChEBI" id="CHEBI:57783"/>
    </ligand>
</feature>
<feature type="binding site" evidence="1">
    <location>
        <position position="106"/>
    </location>
    <ligand>
        <name>NADPH</name>
        <dbReference type="ChEBI" id="CHEBI:57783"/>
    </ligand>
</feature>
<feature type="binding site" evidence="1">
    <location>
        <position position="106"/>
    </location>
    <ligand>
        <name>sn-glycerol 3-phosphate</name>
        <dbReference type="ChEBI" id="CHEBI:57597"/>
    </ligand>
</feature>
<feature type="binding site" evidence="1">
    <location>
        <position position="137"/>
    </location>
    <ligand>
        <name>sn-glycerol 3-phosphate</name>
        <dbReference type="ChEBI" id="CHEBI:57597"/>
    </ligand>
</feature>
<feature type="binding site" evidence="1">
    <location>
        <position position="139"/>
    </location>
    <ligand>
        <name>sn-glycerol 3-phosphate</name>
        <dbReference type="ChEBI" id="CHEBI:57597"/>
    </ligand>
</feature>
<feature type="binding site" evidence="1">
    <location>
        <position position="141"/>
    </location>
    <ligand>
        <name>NADPH</name>
        <dbReference type="ChEBI" id="CHEBI:57783"/>
    </ligand>
</feature>
<feature type="binding site" evidence="1">
    <location>
        <position position="192"/>
    </location>
    <ligand>
        <name>sn-glycerol 3-phosphate</name>
        <dbReference type="ChEBI" id="CHEBI:57597"/>
    </ligand>
</feature>
<feature type="binding site" evidence="1">
    <location>
        <position position="245"/>
    </location>
    <ligand>
        <name>sn-glycerol 3-phosphate</name>
        <dbReference type="ChEBI" id="CHEBI:57597"/>
    </ligand>
</feature>
<feature type="binding site" evidence="1">
    <location>
        <position position="255"/>
    </location>
    <ligand>
        <name>sn-glycerol 3-phosphate</name>
        <dbReference type="ChEBI" id="CHEBI:57597"/>
    </ligand>
</feature>
<feature type="binding site" evidence="1">
    <location>
        <position position="256"/>
    </location>
    <ligand>
        <name>NADPH</name>
        <dbReference type="ChEBI" id="CHEBI:57783"/>
    </ligand>
</feature>
<feature type="binding site" evidence="1">
    <location>
        <position position="256"/>
    </location>
    <ligand>
        <name>sn-glycerol 3-phosphate</name>
        <dbReference type="ChEBI" id="CHEBI:57597"/>
    </ligand>
</feature>
<feature type="binding site" evidence="1">
    <location>
        <position position="257"/>
    </location>
    <ligand>
        <name>sn-glycerol 3-phosphate</name>
        <dbReference type="ChEBI" id="CHEBI:57597"/>
    </ligand>
</feature>
<feature type="binding site" evidence="1">
    <location>
        <position position="280"/>
    </location>
    <ligand>
        <name>NADPH</name>
        <dbReference type="ChEBI" id="CHEBI:57783"/>
    </ligand>
</feature>
<feature type="binding site" evidence="1">
    <location>
        <position position="282"/>
    </location>
    <ligand>
        <name>NADPH</name>
        <dbReference type="ChEBI" id="CHEBI:57783"/>
    </ligand>
</feature>
<dbReference type="EC" id="1.1.1.94" evidence="1"/>
<dbReference type="EMBL" id="AP008934">
    <property type="protein sequence ID" value="BAE18417.1"/>
    <property type="molecule type" value="Genomic_DNA"/>
</dbReference>
<dbReference type="RefSeq" id="WP_011303066.1">
    <property type="nucleotide sequence ID" value="NZ_MTGA01000038.1"/>
</dbReference>
<dbReference type="SMR" id="Q49XS8"/>
<dbReference type="GeneID" id="3616902"/>
<dbReference type="KEGG" id="ssp:SSP1272"/>
<dbReference type="PATRIC" id="fig|342451.11.peg.1274"/>
<dbReference type="eggNOG" id="COG0240">
    <property type="taxonomic scope" value="Bacteria"/>
</dbReference>
<dbReference type="HOGENOM" id="CLU_033449_0_2_9"/>
<dbReference type="OrthoDB" id="9812273at2"/>
<dbReference type="UniPathway" id="UPA00940"/>
<dbReference type="Proteomes" id="UP000006371">
    <property type="component" value="Chromosome"/>
</dbReference>
<dbReference type="GO" id="GO:0005829">
    <property type="term" value="C:cytosol"/>
    <property type="evidence" value="ECO:0007669"/>
    <property type="project" value="TreeGrafter"/>
</dbReference>
<dbReference type="GO" id="GO:0047952">
    <property type="term" value="F:glycerol-3-phosphate dehydrogenase [NAD(P)+] activity"/>
    <property type="evidence" value="ECO:0007669"/>
    <property type="project" value="UniProtKB-UniRule"/>
</dbReference>
<dbReference type="GO" id="GO:0051287">
    <property type="term" value="F:NAD binding"/>
    <property type="evidence" value="ECO:0007669"/>
    <property type="project" value="InterPro"/>
</dbReference>
<dbReference type="GO" id="GO:0005975">
    <property type="term" value="P:carbohydrate metabolic process"/>
    <property type="evidence" value="ECO:0007669"/>
    <property type="project" value="InterPro"/>
</dbReference>
<dbReference type="GO" id="GO:0046167">
    <property type="term" value="P:glycerol-3-phosphate biosynthetic process"/>
    <property type="evidence" value="ECO:0007669"/>
    <property type="project" value="UniProtKB-UniRule"/>
</dbReference>
<dbReference type="GO" id="GO:0046168">
    <property type="term" value="P:glycerol-3-phosphate catabolic process"/>
    <property type="evidence" value="ECO:0007669"/>
    <property type="project" value="InterPro"/>
</dbReference>
<dbReference type="GO" id="GO:0006650">
    <property type="term" value="P:glycerophospholipid metabolic process"/>
    <property type="evidence" value="ECO:0007669"/>
    <property type="project" value="UniProtKB-UniRule"/>
</dbReference>
<dbReference type="GO" id="GO:0008654">
    <property type="term" value="P:phospholipid biosynthetic process"/>
    <property type="evidence" value="ECO:0007669"/>
    <property type="project" value="UniProtKB-KW"/>
</dbReference>
<dbReference type="FunFam" id="1.10.1040.10:FF:000001">
    <property type="entry name" value="Glycerol-3-phosphate dehydrogenase [NAD(P)+]"/>
    <property type="match status" value="1"/>
</dbReference>
<dbReference type="FunFam" id="3.40.50.720:FF:000019">
    <property type="entry name" value="Glycerol-3-phosphate dehydrogenase [NAD(P)+]"/>
    <property type="match status" value="1"/>
</dbReference>
<dbReference type="Gene3D" id="1.10.1040.10">
    <property type="entry name" value="N-(1-d-carboxylethyl)-l-norvaline Dehydrogenase, domain 2"/>
    <property type="match status" value="1"/>
</dbReference>
<dbReference type="Gene3D" id="3.40.50.720">
    <property type="entry name" value="NAD(P)-binding Rossmann-like Domain"/>
    <property type="match status" value="1"/>
</dbReference>
<dbReference type="HAMAP" id="MF_00394">
    <property type="entry name" value="NAD_Glyc3P_dehydrog"/>
    <property type="match status" value="1"/>
</dbReference>
<dbReference type="InterPro" id="IPR008927">
    <property type="entry name" value="6-PGluconate_DH-like_C_sf"/>
</dbReference>
<dbReference type="InterPro" id="IPR013328">
    <property type="entry name" value="6PGD_dom2"/>
</dbReference>
<dbReference type="InterPro" id="IPR006168">
    <property type="entry name" value="G3P_DH_NAD-dep"/>
</dbReference>
<dbReference type="InterPro" id="IPR006109">
    <property type="entry name" value="G3P_DH_NAD-dep_C"/>
</dbReference>
<dbReference type="InterPro" id="IPR011128">
    <property type="entry name" value="G3P_DH_NAD-dep_N"/>
</dbReference>
<dbReference type="InterPro" id="IPR036291">
    <property type="entry name" value="NAD(P)-bd_dom_sf"/>
</dbReference>
<dbReference type="NCBIfam" id="NF000940">
    <property type="entry name" value="PRK00094.1-2"/>
    <property type="match status" value="1"/>
</dbReference>
<dbReference type="NCBIfam" id="NF000941">
    <property type="entry name" value="PRK00094.1-3"/>
    <property type="match status" value="1"/>
</dbReference>
<dbReference type="NCBIfam" id="NF000942">
    <property type="entry name" value="PRK00094.1-4"/>
    <property type="match status" value="1"/>
</dbReference>
<dbReference type="PANTHER" id="PTHR11728">
    <property type="entry name" value="GLYCEROL-3-PHOSPHATE DEHYDROGENASE"/>
    <property type="match status" value="1"/>
</dbReference>
<dbReference type="PANTHER" id="PTHR11728:SF1">
    <property type="entry name" value="GLYCEROL-3-PHOSPHATE DEHYDROGENASE [NAD(+)] 2, CHLOROPLASTIC"/>
    <property type="match status" value="1"/>
</dbReference>
<dbReference type="Pfam" id="PF07479">
    <property type="entry name" value="NAD_Gly3P_dh_C"/>
    <property type="match status" value="1"/>
</dbReference>
<dbReference type="Pfam" id="PF01210">
    <property type="entry name" value="NAD_Gly3P_dh_N"/>
    <property type="match status" value="1"/>
</dbReference>
<dbReference type="PIRSF" id="PIRSF000114">
    <property type="entry name" value="Glycerol-3-P_dh"/>
    <property type="match status" value="1"/>
</dbReference>
<dbReference type="PRINTS" id="PR00077">
    <property type="entry name" value="GPDHDRGNASE"/>
</dbReference>
<dbReference type="SUPFAM" id="SSF48179">
    <property type="entry name" value="6-phosphogluconate dehydrogenase C-terminal domain-like"/>
    <property type="match status" value="1"/>
</dbReference>
<dbReference type="SUPFAM" id="SSF51735">
    <property type="entry name" value="NAD(P)-binding Rossmann-fold domains"/>
    <property type="match status" value="1"/>
</dbReference>
<dbReference type="PROSITE" id="PS00957">
    <property type="entry name" value="NAD_G3PDH"/>
    <property type="match status" value="1"/>
</dbReference>
<comment type="function">
    <text evidence="1">Catalyzes the reduction of the glycolytic intermediate dihydroxyacetone phosphate (DHAP) to sn-glycerol 3-phosphate (G3P), the key precursor for phospholipid synthesis.</text>
</comment>
<comment type="catalytic activity">
    <reaction evidence="1">
        <text>sn-glycerol 3-phosphate + NAD(+) = dihydroxyacetone phosphate + NADH + H(+)</text>
        <dbReference type="Rhea" id="RHEA:11092"/>
        <dbReference type="ChEBI" id="CHEBI:15378"/>
        <dbReference type="ChEBI" id="CHEBI:57540"/>
        <dbReference type="ChEBI" id="CHEBI:57597"/>
        <dbReference type="ChEBI" id="CHEBI:57642"/>
        <dbReference type="ChEBI" id="CHEBI:57945"/>
        <dbReference type="EC" id="1.1.1.94"/>
    </reaction>
    <physiologicalReaction direction="right-to-left" evidence="1">
        <dbReference type="Rhea" id="RHEA:11094"/>
    </physiologicalReaction>
</comment>
<comment type="catalytic activity">
    <reaction evidence="1">
        <text>sn-glycerol 3-phosphate + NADP(+) = dihydroxyacetone phosphate + NADPH + H(+)</text>
        <dbReference type="Rhea" id="RHEA:11096"/>
        <dbReference type="ChEBI" id="CHEBI:15378"/>
        <dbReference type="ChEBI" id="CHEBI:57597"/>
        <dbReference type="ChEBI" id="CHEBI:57642"/>
        <dbReference type="ChEBI" id="CHEBI:57783"/>
        <dbReference type="ChEBI" id="CHEBI:58349"/>
        <dbReference type="EC" id="1.1.1.94"/>
    </reaction>
    <physiologicalReaction direction="right-to-left" evidence="1">
        <dbReference type="Rhea" id="RHEA:11098"/>
    </physiologicalReaction>
</comment>
<comment type="pathway">
    <text evidence="1">Membrane lipid metabolism; glycerophospholipid metabolism.</text>
</comment>
<comment type="subcellular location">
    <subcellularLocation>
        <location evidence="1">Cytoplasm</location>
    </subcellularLocation>
</comment>
<comment type="similarity">
    <text evidence="1">Belongs to the NAD-dependent glycerol-3-phosphate dehydrogenase family.</text>
</comment>
<reference key="1">
    <citation type="journal article" date="2005" name="Proc. Natl. Acad. Sci. U.S.A.">
        <title>Whole genome sequence of Staphylococcus saprophyticus reveals the pathogenesis of uncomplicated urinary tract infection.</title>
        <authorList>
            <person name="Kuroda M."/>
            <person name="Yamashita A."/>
            <person name="Hirakawa H."/>
            <person name="Kumano M."/>
            <person name="Morikawa K."/>
            <person name="Higashide M."/>
            <person name="Maruyama A."/>
            <person name="Inose Y."/>
            <person name="Matoba K."/>
            <person name="Toh H."/>
            <person name="Kuhara S."/>
            <person name="Hattori M."/>
            <person name="Ohta T."/>
        </authorList>
    </citation>
    <scope>NUCLEOTIDE SEQUENCE [LARGE SCALE GENOMIC DNA]</scope>
    <source>
        <strain>ATCC 15305 / DSM 20229 / NCIMB 8711 / NCTC 7292 / S-41</strain>
    </source>
</reference>
<protein>
    <recommendedName>
        <fullName evidence="1">Glycerol-3-phosphate dehydrogenase [NAD(P)+]</fullName>
        <ecNumber evidence="1">1.1.1.94</ecNumber>
    </recommendedName>
    <alternativeName>
        <fullName evidence="1">NAD(P)(+)-dependent glycerol-3-phosphate dehydrogenase</fullName>
    </alternativeName>
    <alternativeName>
        <fullName evidence="1">NAD(P)H-dependent dihydroxyacetone-phosphate reductase</fullName>
    </alternativeName>
</protein>
<keyword id="KW-0963">Cytoplasm</keyword>
<keyword id="KW-0444">Lipid biosynthesis</keyword>
<keyword id="KW-0443">Lipid metabolism</keyword>
<keyword id="KW-0520">NAD</keyword>
<keyword id="KW-0521">NADP</keyword>
<keyword id="KW-0547">Nucleotide-binding</keyword>
<keyword id="KW-0560">Oxidoreductase</keyword>
<keyword id="KW-0594">Phospholipid biosynthesis</keyword>
<keyword id="KW-1208">Phospholipid metabolism</keyword>
<keyword id="KW-1185">Reference proteome</keyword>
<organism>
    <name type="scientific">Staphylococcus saprophyticus subsp. saprophyticus (strain ATCC 15305 / DSM 20229 / NCIMB 8711 / NCTC 7292 / S-41)</name>
    <dbReference type="NCBI Taxonomy" id="342451"/>
    <lineage>
        <taxon>Bacteria</taxon>
        <taxon>Bacillati</taxon>
        <taxon>Bacillota</taxon>
        <taxon>Bacilli</taxon>
        <taxon>Bacillales</taxon>
        <taxon>Staphylococcaceae</taxon>
        <taxon>Staphylococcus</taxon>
    </lineage>
</organism>
<proteinExistence type="inferred from homology"/>
<name>GPDA_STAS1</name>
<sequence length="332" mass="35871">MSKVTVFGTGSFGTALANVLAENGHQVLMWGKNETTINEINEQHINSKYLKTAELNEDIEATLDIETAVAFADIYLMALPTKAMREVAQTIDSLLSSKKTFIHVAKGIENDTYKRVSEMLEDSISPKHNAGIGVLSGPSHAEEVVIKQPTTVAASSKSESVRQLTQDLFMNDYLRVYTNEDLVGVELGGALKNIIAVASGVISGMGFGDNAKAALMTRGLAEISRLGEKLGANPITFLGLGGIGDLIVTCTSTHSRNYTLGYKLGEGKSLDTALNEMNMVVEGVYTTKSVYHLSKEVNVDMPITTALYKVLFENRPVDESVKDLMGRGKKAE</sequence>
<gene>
    <name evidence="1" type="primary">gpsA</name>
    <name type="ordered locus">SSP1272</name>
</gene>
<accession>Q49XS8</accession>